<evidence type="ECO:0000250" key="1"/>
<evidence type="ECO:0000255" key="2"/>
<evidence type="ECO:0000269" key="3">
    <source>
    </source>
</evidence>
<evidence type="ECO:0000269" key="4">
    <source>
    </source>
</evidence>
<evidence type="ECO:0000269" key="5">
    <source>
    </source>
</evidence>
<evidence type="ECO:0000269" key="6">
    <source>
    </source>
</evidence>
<evidence type="ECO:0000303" key="7">
    <source>
    </source>
</evidence>
<evidence type="ECO:0000305" key="8"/>
<keyword id="KW-0021">Allosteric enzyme</keyword>
<keyword id="KW-0067">ATP-binding</keyword>
<keyword id="KW-0963">Cytoplasm</keyword>
<keyword id="KW-0418">Kinase</keyword>
<keyword id="KW-0547">Nucleotide-binding</keyword>
<keyword id="KW-0665">Pyrimidine biosynthesis</keyword>
<keyword id="KW-1185">Reference proteome</keyword>
<keyword id="KW-0808">Transferase</keyword>
<organism>
    <name type="scientific">Bacillus subtilis (strain 168)</name>
    <dbReference type="NCBI Taxonomy" id="224308"/>
    <lineage>
        <taxon>Bacteria</taxon>
        <taxon>Bacillati</taxon>
        <taxon>Bacillota</taxon>
        <taxon>Bacilli</taxon>
        <taxon>Bacillales</taxon>
        <taxon>Bacillaceae</taxon>
        <taxon>Bacillus</taxon>
    </lineage>
</organism>
<proteinExistence type="evidence at protein level"/>
<gene>
    <name type="primary">pyrH</name>
    <name type="synonym">smbA</name>
    <name type="ordered locus">BSU16510</name>
</gene>
<name>PYRH_BACSU</name>
<dbReference type="EC" id="2.7.4.22"/>
<dbReference type="EMBL" id="AL009126">
    <property type="protein sequence ID" value="CAB13524.2"/>
    <property type="molecule type" value="Genomic_DNA"/>
</dbReference>
<dbReference type="PIR" id="F69708">
    <property type="entry name" value="F69708"/>
</dbReference>
<dbReference type="RefSeq" id="NP_389533.2">
    <property type="nucleotide sequence ID" value="NC_000964.3"/>
</dbReference>
<dbReference type="RefSeq" id="WP_003220923.1">
    <property type="nucleotide sequence ID" value="NZ_OZ025638.1"/>
</dbReference>
<dbReference type="SMR" id="O31749"/>
<dbReference type="FunCoup" id="O31749">
    <property type="interactions" value="819"/>
</dbReference>
<dbReference type="STRING" id="224308.BSU16510"/>
<dbReference type="jPOST" id="O31749"/>
<dbReference type="PaxDb" id="224308-BSU16510"/>
<dbReference type="EnsemblBacteria" id="CAB13524">
    <property type="protein sequence ID" value="CAB13524"/>
    <property type="gene ID" value="BSU_16510"/>
</dbReference>
<dbReference type="GeneID" id="11241924"/>
<dbReference type="GeneID" id="939602"/>
<dbReference type="KEGG" id="bsu:BSU16510"/>
<dbReference type="PATRIC" id="fig|224308.179.peg.1792"/>
<dbReference type="eggNOG" id="COG0528">
    <property type="taxonomic scope" value="Bacteria"/>
</dbReference>
<dbReference type="InParanoid" id="O31749"/>
<dbReference type="OrthoDB" id="9807458at2"/>
<dbReference type="PhylomeDB" id="O31749"/>
<dbReference type="BioCyc" id="BSUB:BSU16510-MONOMER"/>
<dbReference type="BRENDA" id="2.7.4.22">
    <property type="organism ID" value="658"/>
</dbReference>
<dbReference type="SABIO-RK" id="O31749"/>
<dbReference type="UniPathway" id="UPA00159">
    <property type="reaction ID" value="UER00275"/>
</dbReference>
<dbReference type="PRO" id="PR:O31749"/>
<dbReference type="Proteomes" id="UP000001570">
    <property type="component" value="Chromosome"/>
</dbReference>
<dbReference type="GO" id="GO:0005737">
    <property type="term" value="C:cytoplasm"/>
    <property type="evidence" value="ECO:0007669"/>
    <property type="project" value="UniProtKB-SubCell"/>
</dbReference>
<dbReference type="GO" id="GO:0005524">
    <property type="term" value="F:ATP binding"/>
    <property type="evidence" value="ECO:0007669"/>
    <property type="project" value="UniProtKB-KW"/>
</dbReference>
<dbReference type="GO" id="GO:0033862">
    <property type="term" value="F:UMP kinase activity"/>
    <property type="evidence" value="ECO:0000318"/>
    <property type="project" value="GO_Central"/>
</dbReference>
<dbReference type="GO" id="GO:0044210">
    <property type="term" value="P:'de novo' CTP biosynthetic process"/>
    <property type="evidence" value="ECO:0007669"/>
    <property type="project" value="UniProtKB-UniRule"/>
</dbReference>
<dbReference type="GO" id="GO:0006225">
    <property type="term" value="P:UDP biosynthetic process"/>
    <property type="evidence" value="ECO:0000318"/>
    <property type="project" value="GO_Central"/>
</dbReference>
<dbReference type="CDD" id="cd04254">
    <property type="entry name" value="AAK_UMPK-PyrH-Ec"/>
    <property type="match status" value="1"/>
</dbReference>
<dbReference type="FunFam" id="3.40.1160.10:FF:000001">
    <property type="entry name" value="Uridylate kinase"/>
    <property type="match status" value="1"/>
</dbReference>
<dbReference type="Gene3D" id="3.40.1160.10">
    <property type="entry name" value="Acetylglutamate kinase-like"/>
    <property type="match status" value="1"/>
</dbReference>
<dbReference type="HAMAP" id="MF_01220_B">
    <property type="entry name" value="PyrH_B"/>
    <property type="match status" value="1"/>
</dbReference>
<dbReference type="InterPro" id="IPR036393">
    <property type="entry name" value="AceGlu_kinase-like_sf"/>
</dbReference>
<dbReference type="InterPro" id="IPR001048">
    <property type="entry name" value="Asp/Glu/Uridylate_kinase"/>
</dbReference>
<dbReference type="InterPro" id="IPR011817">
    <property type="entry name" value="Uridylate_kinase"/>
</dbReference>
<dbReference type="InterPro" id="IPR015963">
    <property type="entry name" value="Uridylate_kinase_bac"/>
</dbReference>
<dbReference type="NCBIfam" id="TIGR02075">
    <property type="entry name" value="pyrH_bact"/>
    <property type="match status" value="1"/>
</dbReference>
<dbReference type="PANTHER" id="PTHR42833">
    <property type="entry name" value="URIDYLATE KINASE"/>
    <property type="match status" value="1"/>
</dbReference>
<dbReference type="PANTHER" id="PTHR42833:SF4">
    <property type="entry name" value="URIDYLATE KINASE PUMPKIN, CHLOROPLASTIC"/>
    <property type="match status" value="1"/>
</dbReference>
<dbReference type="Pfam" id="PF00696">
    <property type="entry name" value="AA_kinase"/>
    <property type="match status" value="1"/>
</dbReference>
<dbReference type="PIRSF" id="PIRSF005650">
    <property type="entry name" value="Uridylate_kin"/>
    <property type="match status" value="1"/>
</dbReference>
<dbReference type="SUPFAM" id="SSF53633">
    <property type="entry name" value="Carbamate kinase-like"/>
    <property type="match status" value="1"/>
</dbReference>
<protein>
    <recommendedName>
        <fullName>Uridylate kinase</fullName>
        <shortName>UK</shortName>
        <ecNumber>2.7.4.22</ecNumber>
    </recommendedName>
    <alternativeName>
        <fullName>Uridine monophosphate kinase</fullName>
        <shortName>UMP kinase</shortName>
        <shortName>UMPK</shortName>
    </alternativeName>
</protein>
<reference key="1">
    <citation type="journal article" date="1997" name="Nature">
        <title>The complete genome sequence of the Gram-positive bacterium Bacillus subtilis.</title>
        <authorList>
            <person name="Kunst F."/>
            <person name="Ogasawara N."/>
            <person name="Moszer I."/>
            <person name="Albertini A.M."/>
            <person name="Alloni G."/>
            <person name="Azevedo V."/>
            <person name="Bertero M.G."/>
            <person name="Bessieres P."/>
            <person name="Bolotin A."/>
            <person name="Borchert S."/>
            <person name="Borriss R."/>
            <person name="Boursier L."/>
            <person name="Brans A."/>
            <person name="Braun M."/>
            <person name="Brignell S.C."/>
            <person name="Bron S."/>
            <person name="Brouillet S."/>
            <person name="Bruschi C.V."/>
            <person name="Caldwell B."/>
            <person name="Capuano V."/>
            <person name="Carter N.M."/>
            <person name="Choi S.-K."/>
            <person name="Codani J.-J."/>
            <person name="Connerton I.F."/>
            <person name="Cummings N.J."/>
            <person name="Daniel R.A."/>
            <person name="Denizot F."/>
            <person name="Devine K.M."/>
            <person name="Duesterhoeft A."/>
            <person name="Ehrlich S.D."/>
            <person name="Emmerson P.T."/>
            <person name="Entian K.-D."/>
            <person name="Errington J."/>
            <person name="Fabret C."/>
            <person name="Ferrari E."/>
            <person name="Foulger D."/>
            <person name="Fritz C."/>
            <person name="Fujita M."/>
            <person name="Fujita Y."/>
            <person name="Fuma S."/>
            <person name="Galizzi A."/>
            <person name="Galleron N."/>
            <person name="Ghim S.-Y."/>
            <person name="Glaser P."/>
            <person name="Goffeau A."/>
            <person name="Golightly E.J."/>
            <person name="Grandi G."/>
            <person name="Guiseppi G."/>
            <person name="Guy B.J."/>
            <person name="Haga K."/>
            <person name="Haiech J."/>
            <person name="Harwood C.R."/>
            <person name="Henaut A."/>
            <person name="Hilbert H."/>
            <person name="Holsappel S."/>
            <person name="Hosono S."/>
            <person name="Hullo M.-F."/>
            <person name="Itaya M."/>
            <person name="Jones L.-M."/>
            <person name="Joris B."/>
            <person name="Karamata D."/>
            <person name="Kasahara Y."/>
            <person name="Klaerr-Blanchard M."/>
            <person name="Klein C."/>
            <person name="Kobayashi Y."/>
            <person name="Koetter P."/>
            <person name="Koningstein G."/>
            <person name="Krogh S."/>
            <person name="Kumano M."/>
            <person name="Kurita K."/>
            <person name="Lapidus A."/>
            <person name="Lardinois S."/>
            <person name="Lauber J."/>
            <person name="Lazarevic V."/>
            <person name="Lee S.-M."/>
            <person name="Levine A."/>
            <person name="Liu H."/>
            <person name="Masuda S."/>
            <person name="Mauel C."/>
            <person name="Medigue C."/>
            <person name="Medina N."/>
            <person name="Mellado R.P."/>
            <person name="Mizuno M."/>
            <person name="Moestl D."/>
            <person name="Nakai S."/>
            <person name="Noback M."/>
            <person name="Noone D."/>
            <person name="O'Reilly M."/>
            <person name="Ogawa K."/>
            <person name="Ogiwara A."/>
            <person name="Oudega B."/>
            <person name="Park S.-H."/>
            <person name="Parro V."/>
            <person name="Pohl T.M."/>
            <person name="Portetelle D."/>
            <person name="Porwollik S."/>
            <person name="Prescott A.M."/>
            <person name="Presecan E."/>
            <person name="Pujic P."/>
            <person name="Purnelle B."/>
            <person name="Rapoport G."/>
            <person name="Rey M."/>
            <person name="Reynolds S."/>
            <person name="Rieger M."/>
            <person name="Rivolta C."/>
            <person name="Rocha E."/>
            <person name="Roche B."/>
            <person name="Rose M."/>
            <person name="Sadaie Y."/>
            <person name="Sato T."/>
            <person name="Scanlan E."/>
            <person name="Schleich S."/>
            <person name="Schroeter R."/>
            <person name="Scoffone F."/>
            <person name="Sekiguchi J."/>
            <person name="Sekowska A."/>
            <person name="Seror S.J."/>
            <person name="Serror P."/>
            <person name="Shin B.-S."/>
            <person name="Soldo B."/>
            <person name="Sorokin A."/>
            <person name="Tacconi E."/>
            <person name="Takagi T."/>
            <person name="Takahashi H."/>
            <person name="Takemaru K."/>
            <person name="Takeuchi M."/>
            <person name="Tamakoshi A."/>
            <person name="Tanaka T."/>
            <person name="Terpstra P."/>
            <person name="Tognoni A."/>
            <person name="Tosato V."/>
            <person name="Uchiyama S."/>
            <person name="Vandenbol M."/>
            <person name="Vannier F."/>
            <person name="Vassarotti A."/>
            <person name="Viari A."/>
            <person name="Wambutt R."/>
            <person name="Wedler E."/>
            <person name="Wedler H."/>
            <person name="Weitzenegger T."/>
            <person name="Winters P."/>
            <person name="Wipat A."/>
            <person name="Yamamoto H."/>
            <person name="Yamane K."/>
            <person name="Yasumoto K."/>
            <person name="Yata K."/>
            <person name="Yoshida K."/>
            <person name="Yoshikawa H.-F."/>
            <person name="Zumstein E."/>
            <person name="Yoshikawa H."/>
            <person name="Danchin A."/>
        </authorList>
    </citation>
    <scope>NUCLEOTIDE SEQUENCE [LARGE SCALE GENOMIC DNA]</scope>
    <source>
        <strain>168</strain>
    </source>
</reference>
<reference key="2">
    <citation type="journal article" date="1999" name="Genome Res.">
        <title>Detecting and analyzing DNA sequencing errors: toward a higher quality of the Bacillus subtilis genome sequence.</title>
        <authorList>
            <person name="Medigue C."/>
            <person name="Rose M."/>
            <person name="Viari A."/>
            <person name="Danchin A."/>
        </authorList>
    </citation>
    <scope>SEQUENCE REVISION TO 57-60</scope>
</reference>
<reference key="3">
    <citation type="journal article" date="2003" name="Eur. J. Biochem.">
        <title>UMP kinase from the Gram-positive bacterium Bacillus subtilis is strongly dependent on GTP for optimal activity.</title>
        <authorList>
            <person name="Gagyi C."/>
            <person name="Bucurenci N."/>
            <person name="Sirbu O."/>
            <person name="Labesse G."/>
            <person name="Ionescu M."/>
            <person name="Ofiteru A."/>
            <person name="Assairi L."/>
            <person name="Landais S."/>
            <person name="Danchin A."/>
            <person name="Barzu O."/>
            <person name="Gilles A.-M."/>
        </authorList>
    </citation>
    <scope>FUNCTION</scope>
    <scope>SUBSTRATE SPECIFICITY</scope>
    <scope>ACTIVITY REGULATION</scope>
    <scope>KINETIC PARAMETERS</scope>
    <scope>MASS SPECTROMETRY</scope>
    <scope>SUBUNIT</scope>
    <source>
        <strain>168</strain>
    </source>
</reference>
<reference key="4">
    <citation type="journal article" date="2004" name="Curr. Microbiol.">
        <title>Identification and immunochemical location of UMP kinase from Bacillus subtilis.</title>
        <authorList>
            <person name="Gagyi C."/>
            <person name="Ionescu M."/>
            <person name="Gounon P."/>
            <person name="Sakamoto H."/>
            <person name="Rousselle J.-C."/>
            <person name="Laurent-Winter C."/>
        </authorList>
    </citation>
    <scope>FUNCTION</scope>
    <scope>SUBCELLULAR LOCATION</scope>
    <source>
        <strain>168</strain>
    </source>
</reference>
<reference key="5">
    <citation type="journal article" date="2007" name="J. Biol. Chem.">
        <title>Regulatory mechanisms differ in UMP kinases from Gram-negative and Gram-positive bacteria.</title>
        <authorList>
            <person name="Evrin C."/>
            <person name="Straut M."/>
            <person name="Slavova-Azmanova N."/>
            <person name="Bucurenci N."/>
            <person name="Onu A."/>
            <person name="Assairi L."/>
            <person name="Ionescu M."/>
            <person name="Palibroda N."/>
            <person name="Barzu O."/>
            <person name="Gilles A.-M."/>
        </authorList>
    </citation>
    <scope>ACTIVITY REGULATION</scope>
    <scope>KINETIC PARAMETERS</scope>
    <scope>MUTAGENESIS OF THR-135 AND ASN-137</scope>
</reference>
<reference key="6">
    <citation type="journal article" date="2021" name="Redox Biol.">
        <title>The Bacillus subtilis monothiol bacilliredoxin BrxC (YtxJ) and the Bdr (YpdA) disulfide reductase reduce S-bacillithiolated proteins.</title>
        <authorList>
            <person name="Gaballa A."/>
            <person name="Su T.T."/>
            <person name="Helmann J.D."/>
        </authorList>
    </citation>
    <scope>INTERACTION WITH BRXC</scope>
    <scope>IDENTIFICATION BY MASS SPECTROMETRY</scope>
    <source>
        <strain evidence="7">168 / CU1065</strain>
    </source>
</reference>
<comment type="function">
    <text evidence="3 4">Catalyzes the reversible phosphorylation of UMP to UDP, with ATP or dATP as the most efficient phosphate donors. Is also able to phosphorylate 5-fluoro-UMP and 6-aza-UMP.</text>
</comment>
<comment type="catalytic activity">
    <reaction>
        <text>UMP + ATP = UDP + ADP</text>
        <dbReference type="Rhea" id="RHEA:24400"/>
        <dbReference type="ChEBI" id="CHEBI:30616"/>
        <dbReference type="ChEBI" id="CHEBI:57865"/>
        <dbReference type="ChEBI" id="CHEBI:58223"/>
        <dbReference type="ChEBI" id="CHEBI:456216"/>
        <dbReference type="EC" id="2.7.4.22"/>
    </reaction>
</comment>
<comment type="activity regulation">
    <text evidence="3 5">Allosterically activated by GTP. Can also be activated by dGTP and 3'-anthraniloyl-2'-deoxyguanosine-5'-triphosphate (Ant-dGTP). Inhibited by UTP, 5-bromo-UTP and 5-iodo-UTP.</text>
</comment>
<comment type="biophysicochemical properties">
    <kinetics>
        <KM evidence="3 5">0.9 mM for ATP</KM>
        <KM evidence="3 5">8 uM for UMP (in the absence of GTP)</KM>
        <KM evidence="3 5">30 uM for UMP (in the presence of GTP)</KM>
        <KM evidence="3 5">120 uM for 5-fluoro-UMP</KM>
        <KM evidence="3 5">140 uM for 6-aza-UMP</KM>
        <Vmax evidence="3 5">25.0 umol/min/mg enzyme with UMP as substrate</Vmax>
        <Vmax evidence="3 5">24.0 umol/min/mg enzyme with 5-fluoro-UMP as substrate</Vmax>
        <Vmax evidence="3 5">0.6 umol/min/mg enzyme with 6-aza-UMP as substrate</Vmax>
        <text>In the absence of GTP, the activity is less than 10% of its maximum activity. Is unstable in the absence of UTP. Positive cooperativity is observed with ATP as variable substrate, but it is strongly reduced in the presence of GTP. GTP enhances the affinity for ATP whereas UTP decreases it.</text>
    </kinetics>
</comment>
<comment type="pathway">
    <text>Pyrimidine metabolism; CTP biosynthesis via de novo pathway; UDP from UMP (UMPK route): step 1/1.</text>
</comment>
<comment type="subunit">
    <text evidence="3 6">Homohexamer (PubMed:12869195). Interacts with BrxC (PubMed:33722570).</text>
</comment>
<comment type="subcellular location">
    <subcellularLocation>
        <location evidence="4">Cytoplasm</location>
    </subcellularLocation>
    <text>Is predominantly localized near the bacterial membranes.</text>
</comment>
<comment type="mass spectrometry"/>
<comment type="miscellaneous">
    <text>The peripheral distribution of PyrH is related most probably to its role in the synthesis of membrane sugar components and its putative role in cell division.</text>
</comment>
<comment type="similarity">
    <text evidence="8">Belongs to the UMP kinase family.</text>
</comment>
<accession>O31749</accession>
<feature type="chain" id="PRO_0000143825" description="Uridylate kinase">
    <location>
        <begin position="1"/>
        <end position="240"/>
    </location>
</feature>
<feature type="region of interest" description="Involved in allosteric activation by GTP" evidence="2">
    <location>
        <begin position="20"/>
        <end position="25"/>
    </location>
</feature>
<feature type="binding site" evidence="1">
    <location>
        <begin position="12"/>
        <end position="15"/>
    </location>
    <ligand>
        <name>ATP</name>
        <dbReference type="ChEBI" id="CHEBI:30616"/>
    </ligand>
</feature>
<feature type="binding site" evidence="1">
    <location>
        <position position="54"/>
    </location>
    <ligand>
        <name>UMP</name>
        <dbReference type="ChEBI" id="CHEBI:57865"/>
    </ligand>
</feature>
<feature type="binding site" evidence="1">
    <location>
        <position position="55"/>
    </location>
    <ligand>
        <name>ATP</name>
        <dbReference type="ChEBI" id="CHEBI:30616"/>
    </ligand>
</feature>
<feature type="binding site" evidence="1">
    <location>
        <position position="59"/>
    </location>
    <ligand>
        <name>ATP</name>
        <dbReference type="ChEBI" id="CHEBI:30616"/>
    </ligand>
</feature>
<feature type="binding site" evidence="1">
    <location>
        <position position="74"/>
    </location>
    <ligand>
        <name>UMP</name>
        <dbReference type="ChEBI" id="CHEBI:57865"/>
    </ligand>
</feature>
<feature type="binding site" evidence="1">
    <location>
        <begin position="135"/>
        <end position="142"/>
    </location>
    <ligand>
        <name>UMP</name>
        <dbReference type="ChEBI" id="CHEBI:57865"/>
    </ligand>
</feature>
<feature type="binding site" evidence="1">
    <location>
        <position position="163"/>
    </location>
    <ligand>
        <name>ATP</name>
        <dbReference type="ChEBI" id="CHEBI:30616"/>
    </ligand>
</feature>
<feature type="binding site" evidence="1">
    <location>
        <position position="169"/>
    </location>
    <ligand>
        <name>ATP</name>
        <dbReference type="ChEBI" id="CHEBI:30616"/>
    </ligand>
</feature>
<feature type="binding site" evidence="1">
    <location>
        <position position="172"/>
    </location>
    <ligand>
        <name>ATP</name>
        <dbReference type="ChEBI" id="CHEBI:30616"/>
    </ligand>
</feature>
<feature type="mutagenesis site" description="Loss of cooperativity with ATP. 5-fold decrease in affinity for UMP. Increased sensitivity to activation by GTP." evidence="5">
    <original>T</original>
    <variation>A</variation>
    <location>
        <position position="135"/>
    </location>
</feature>
<feature type="mutagenesis site" description="Loss of cooperativity with ATP. Increased sensitivity to activation by GTP." evidence="5">
    <original>N</original>
    <variation>A</variation>
    <location>
        <position position="137"/>
    </location>
</feature>
<sequence>MEKPKYKRIVLKLSGEALAGEQGNGINPTVIQSIAKQVKEIAELEVEVAVVVGGGNLWRGKTGSDLGMDRATADYMGMLATVMNSLALQDSLETLGIQSRVQTSIEMRQVAEPYIRRKAIRHLEKKRVVIFAAGTGNPYFSTDTTAALRAAEIEADVILMAKNNVDGVYNADPRKDESAVKYESLSYLDVLKDGLEVMDSTASSLCMDNDIPLIVFSIMEEGNIKRAVIGESIGTIVRGK</sequence>